<evidence type="ECO:0000255" key="1">
    <source>
        <dbReference type="HAMAP-Rule" id="MF_01507"/>
    </source>
</evidence>
<protein>
    <recommendedName>
        <fullName evidence="1">UPF0297 protein STER_1937</fullName>
    </recommendedName>
</protein>
<feature type="chain" id="PRO_0000289314" description="UPF0297 protein STER_1937">
    <location>
        <begin position="1"/>
        <end position="88"/>
    </location>
</feature>
<sequence length="88" mass="10184">MGFTDETVRFNLNDGDKNEISNTLTNVYRSLAEKGYNPINQIVGYVLSGDPAYVPRYNDARNQIRKYERDEIVEELVRYYLKGNGTDL</sequence>
<gene>
    <name type="ordered locus">STER_1937</name>
</gene>
<accession>Q03IC5</accession>
<name>Y1937_STRTD</name>
<dbReference type="EMBL" id="CP000419">
    <property type="protein sequence ID" value="ABJ67047.1"/>
    <property type="molecule type" value="Genomic_DNA"/>
</dbReference>
<dbReference type="RefSeq" id="WP_011681731.1">
    <property type="nucleotide sequence ID" value="NC_008532.1"/>
</dbReference>
<dbReference type="SMR" id="Q03IC5"/>
<dbReference type="KEGG" id="ste:STER_1937"/>
<dbReference type="HOGENOM" id="CLU_162466_0_0_9"/>
<dbReference type="HAMAP" id="MF_01507">
    <property type="entry name" value="UPF0297"/>
    <property type="match status" value="1"/>
</dbReference>
<dbReference type="InterPro" id="IPR009309">
    <property type="entry name" value="IreB"/>
</dbReference>
<dbReference type="NCBIfam" id="NF003997">
    <property type="entry name" value="PRK05473.1"/>
    <property type="match status" value="1"/>
</dbReference>
<dbReference type="PANTHER" id="PTHR40067">
    <property type="entry name" value="UPF0297 PROTEIN YRZL"/>
    <property type="match status" value="1"/>
</dbReference>
<dbReference type="PANTHER" id="PTHR40067:SF1">
    <property type="entry name" value="UPF0297 PROTEIN YRZL"/>
    <property type="match status" value="1"/>
</dbReference>
<dbReference type="Pfam" id="PF06135">
    <property type="entry name" value="IreB"/>
    <property type="match status" value="1"/>
</dbReference>
<dbReference type="PIRSF" id="PIRSF037258">
    <property type="entry name" value="DUF965_bac"/>
    <property type="match status" value="1"/>
</dbReference>
<proteinExistence type="inferred from homology"/>
<reference key="1">
    <citation type="journal article" date="2006" name="Proc. Natl. Acad. Sci. U.S.A.">
        <title>Comparative genomics of the lactic acid bacteria.</title>
        <authorList>
            <person name="Makarova K.S."/>
            <person name="Slesarev A."/>
            <person name="Wolf Y.I."/>
            <person name="Sorokin A."/>
            <person name="Mirkin B."/>
            <person name="Koonin E.V."/>
            <person name="Pavlov A."/>
            <person name="Pavlova N."/>
            <person name="Karamychev V."/>
            <person name="Polouchine N."/>
            <person name="Shakhova V."/>
            <person name="Grigoriev I."/>
            <person name="Lou Y."/>
            <person name="Rohksar D."/>
            <person name="Lucas S."/>
            <person name="Huang K."/>
            <person name="Goodstein D.M."/>
            <person name="Hawkins T."/>
            <person name="Plengvidhya V."/>
            <person name="Welker D."/>
            <person name="Hughes J."/>
            <person name="Goh Y."/>
            <person name="Benson A."/>
            <person name="Baldwin K."/>
            <person name="Lee J.-H."/>
            <person name="Diaz-Muniz I."/>
            <person name="Dosti B."/>
            <person name="Smeianov V."/>
            <person name="Wechter W."/>
            <person name="Barabote R."/>
            <person name="Lorca G."/>
            <person name="Altermann E."/>
            <person name="Barrangou R."/>
            <person name="Ganesan B."/>
            <person name="Xie Y."/>
            <person name="Rawsthorne H."/>
            <person name="Tamir D."/>
            <person name="Parker C."/>
            <person name="Breidt F."/>
            <person name="Broadbent J.R."/>
            <person name="Hutkins R."/>
            <person name="O'Sullivan D."/>
            <person name="Steele J."/>
            <person name="Unlu G."/>
            <person name="Saier M.H. Jr."/>
            <person name="Klaenhammer T."/>
            <person name="Richardson P."/>
            <person name="Kozyavkin S."/>
            <person name="Weimer B.C."/>
            <person name="Mills D.A."/>
        </authorList>
    </citation>
    <scope>NUCLEOTIDE SEQUENCE [LARGE SCALE GENOMIC DNA]</scope>
    <source>
        <strain>ATCC BAA-491 / LMD-9</strain>
    </source>
</reference>
<comment type="similarity">
    <text evidence="1">Belongs to the UPF0297 family.</text>
</comment>
<organism>
    <name type="scientific">Streptococcus thermophilus (strain ATCC BAA-491 / LMD-9)</name>
    <dbReference type="NCBI Taxonomy" id="322159"/>
    <lineage>
        <taxon>Bacteria</taxon>
        <taxon>Bacillati</taxon>
        <taxon>Bacillota</taxon>
        <taxon>Bacilli</taxon>
        <taxon>Lactobacillales</taxon>
        <taxon>Streptococcaceae</taxon>
        <taxon>Streptococcus</taxon>
    </lineage>
</organism>